<gene>
    <name evidence="1" type="primary">metK</name>
    <name type="ordered locus">FTL_1739</name>
</gene>
<organism>
    <name type="scientific">Francisella tularensis subsp. holarctica (strain LVS)</name>
    <dbReference type="NCBI Taxonomy" id="376619"/>
    <lineage>
        <taxon>Bacteria</taxon>
        <taxon>Pseudomonadati</taxon>
        <taxon>Pseudomonadota</taxon>
        <taxon>Gammaproteobacteria</taxon>
        <taxon>Thiotrichales</taxon>
        <taxon>Francisellaceae</taxon>
        <taxon>Francisella</taxon>
    </lineage>
</organism>
<dbReference type="EC" id="2.5.1.6" evidence="1"/>
<dbReference type="EMBL" id="AM233362">
    <property type="protein sequence ID" value="CAJ80178.1"/>
    <property type="molecule type" value="Genomic_DNA"/>
</dbReference>
<dbReference type="RefSeq" id="WP_003017219.1">
    <property type="nucleotide sequence ID" value="NZ_CP009694.1"/>
</dbReference>
<dbReference type="SMR" id="Q2A1N2"/>
<dbReference type="GeneID" id="75264705"/>
<dbReference type="KEGG" id="ftl:FTL_1739"/>
<dbReference type="UniPathway" id="UPA00315">
    <property type="reaction ID" value="UER00080"/>
</dbReference>
<dbReference type="Proteomes" id="UP000001944">
    <property type="component" value="Chromosome"/>
</dbReference>
<dbReference type="GO" id="GO:0005737">
    <property type="term" value="C:cytoplasm"/>
    <property type="evidence" value="ECO:0007669"/>
    <property type="project" value="UniProtKB-SubCell"/>
</dbReference>
<dbReference type="GO" id="GO:0005524">
    <property type="term" value="F:ATP binding"/>
    <property type="evidence" value="ECO:0007669"/>
    <property type="project" value="UniProtKB-UniRule"/>
</dbReference>
<dbReference type="GO" id="GO:0000287">
    <property type="term" value="F:magnesium ion binding"/>
    <property type="evidence" value="ECO:0007669"/>
    <property type="project" value="UniProtKB-UniRule"/>
</dbReference>
<dbReference type="GO" id="GO:0004478">
    <property type="term" value="F:methionine adenosyltransferase activity"/>
    <property type="evidence" value="ECO:0007669"/>
    <property type="project" value="UniProtKB-UniRule"/>
</dbReference>
<dbReference type="GO" id="GO:0006730">
    <property type="term" value="P:one-carbon metabolic process"/>
    <property type="evidence" value="ECO:0007669"/>
    <property type="project" value="UniProtKB-KW"/>
</dbReference>
<dbReference type="GO" id="GO:0006556">
    <property type="term" value="P:S-adenosylmethionine biosynthetic process"/>
    <property type="evidence" value="ECO:0007669"/>
    <property type="project" value="UniProtKB-UniRule"/>
</dbReference>
<dbReference type="CDD" id="cd18079">
    <property type="entry name" value="S-AdoMet_synt"/>
    <property type="match status" value="1"/>
</dbReference>
<dbReference type="FunFam" id="3.30.300.10:FF:000003">
    <property type="entry name" value="S-adenosylmethionine synthase"/>
    <property type="match status" value="1"/>
</dbReference>
<dbReference type="Gene3D" id="3.30.300.10">
    <property type="match status" value="3"/>
</dbReference>
<dbReference type="HAMAP" id="MF_00086">
    <property type="entry name" value="S_AdoMet_synth1"/>
    <property type="match status" value="1"/>
</dbReference>
<dbReference type="InterPro" id="IPR022631">
    <property type="entry name" value="ADOMET_SYNTHASE_CS"/>
</dbReference>
<dbReference type="InterPro" id="IPR022630">
    <property type="entry name" value="S-AdoMet_synt_C"/>
</dbReference>
<dbReference type="InterPro" id="IPR022629">
    <property type="entry name" value="S-AdoMet_synt_central"/>
</dbReference>
<dbReference type="InterPro" id="IPR022628">
    <property type="entry name" value="S-AdoMet_synt_N"/>
</dbReference>
<dbReference type="InterPro" id="IPR002133">
    <property type="entry name" value="S-AdoMet_synthetase"/>
</dbReference>
<dbReference type="InterPro" id="IPR022636">
    <property type="entry name" value="S-AdoMet_synthetase_sfam"/>
</dbReference>
<dbReference type="NCBIfam" id="TIGR01034">
    <property type="entry name" value="metK"/>
    <property type="match status" value="1"/>
</dbReference>
<dbReference type="PANTHER" id="PTHR11964">
    <property type="entry name" value="S-ADENOSYLMETHIONINE SYNTHETASE"/>
    <property type="match status" value="1"/>
</dbReference>
<dbReference type="Pfam" id="PF02773">
    <property type="entry name" value="S-AdoMet_synt_C"/>
    <property type="match status" value="1"/>
</dbReference>
<dbReference type="Pfam" id="PF02772">
    <property type="entry name" value="S-AdoMet_synt_M"/>
    <property type="match status" value="1"/>
</dbReference>
<dbReference type="Pfam" id="PF00438">
    <property type="entry name" value="S-AdoMet_synt_N"/>
    <property type="match status" value="1"/>
</dbReference>
<dbReference type="PIRSF" id="PIRSF000497">
    <property type="entry name" value="MAT"/>
    <property type="match status" value="1"/>
</dbReference>
<dbReference type="SUPFAM" id="SSF55973">
    <property type="entry name" value="S-adenosylmethionine synthetase"/>
    <property type="match status" value="3"/>
</dbReference>
<dbReference type="PROSITE" id="PS00376">
    <property type="entry name" value="ADOMET_SYNTHASE_1"/>
    <property type="match status" value="1"/>
</dbReference>
<dbReference type="PROSITE" id="PS00377">
    <property type="entry name" value="ADOMET_SYNTHASE_2"/>
    <property type="match status" value="1"/>
</dbReference>
<reference key="1">
    <citation type="submission" date="2006-03" db="EMBL/GenBank/DDBJ databases">
        <title>Complete genome sequence of Francisella tularensis LVS (Live Vaccine Strain).</title>
        <authorList>
            <person name="Chain P."/>
            <person name="Larimer F."/>
            <person name="Land M."/>
            <person name="Stilwagen S."/>
            <person name="Larsson P."/>
            <person name="Bearden S."/>
            <person name="Chu M."/>
            <person name="Oyston P."/>
            <person name="Forsman M."/>
            <person name="Andersson S."/>
            <person name="Lindler L."/>
            <person name="Titball R."/>
            <person name="Garcia E."/>
        </authorList>
    </citation>
    <scope>NUCLEOTIDE SEQUENCE [LARGE SCALE GENOMIC DNA]</scope>
    <source>
        <strain>LVS</strain>
    </source>
</reference>
<protein>
    <recommendedName>
        <fullName evidence="1">S-adenosylmethionine synthase</fullName>
        <shortName evidence="1">AdoMet synthase</shortName>
        <ecNumber evidence="1">2.5.1.6</ecNumber>
    </recommendedName>
    <alternativeName>
        <fullName evidence="1">MAT</fullName>
    </alternativeName>
    <alternativeName>
        <fullName evidence="1">Methionine adenosyltransferase</fullName>
    </alternativeName>
</protein>
<sequence length="386" mass="42103">MSKNYLFTSESVSEGHPDKLADQISDAILDEILKQDKNARVACETLVKTGMALVAGEITTSAWVDIEELVRNVITETGYDNASKGIDGRTCSVINAIGKQSRDIAQGVDRGSLEDLGAGDQGLMFGFATNETPTLMPSAIYYSHLLMRKQAELRKSGKLAWLRPDAKAQVTLAYENDKPKFIDTIVLSTQHNESISQKELHDAVIEEIVKKVIPNELITKDTKYHINPTGVFLIGGPQGDCGLTGRKIIVDTYGGAAHHGGGAFSGKDPSKVDRSGAYMGRYIAKNIVAAGLADKCEVQVAYAIGVAKPVSLMVNTFGTGKITDNQIEKLVAEVFDLRVGKIIENLDLLRPIYRKTSNYGHFGRELPEFTWEKIDKADILKSAARI</sequence>
<keyword id="KW-0067">ATP-binding</keyword>
<keyword id="KW-0963">Cytoplasm</keyword>
<keyword id="KW-0460">Magnesium</keyword>
<keyword id="KW-0479">Metal-binding</keyword>
<keyword id="KW-0547">Nucleotide-binding</keyword>
<keyword id="KW-0554">One-carbon metabolism</keyword>
<keyword id="KW-0630">Potassium</keyword>
<keyword id="KW-1185">Reference proteome</keyword>
<keyword id="KW-0808">Transferase</keyword>
<evidence type="ECO:0000255" key="1">
    <source>
        <dbReference type="HAMAP-Rule" id="MF_00086"/>
    </source>
</evidence>
<comment type="function">
    <text evidence="1">Catalyzes the formation of S-adenosylmethionine (AdoMet) from methionine and ATP. The overall synthetic reaction is composed of two sequential steps, AdoMet formation and the subsequent tripolyphosphate hydrolysis which occurs prior to release of AdoMet from the enzyme.</text>
</comment>
<comment type="catalytic activity">
    <reaction evidence="1">
        <text>L-methionine + ATP + H2O = S-adenosyl-L-methionine + phosphate + diphosphate</text>
        <dbReference type="Rhea" id="RHEA:21080"/>
        <dbReference type="ChEBI" id="CHEBI:15377"/>
        <dbReference type="ChEBI" id="CHEBI:30616"/>
        <dbReference type="ChEBI" id="CHEBI:33019"/>
        <dbReference type="ChEBI" id="CHEBI:43474"/>
        <dbReference type="ChEBI" id="CHEBI:57844"/>
        <dbReference type="ChEBI" id="CHEBI:59789"/>
        <dbReference type="EC" id="2.5.1.6"/>
    </reaction>
</comment>
<comment type="cofactor">
    <cofactor evidence="1">
        <name>Mg(2+)</name>
        <dbReference type="ChEBI" id="CHEBI:18420"/>
    </cofactor>
    <text evidence="1">Binds 2 divalent ions per subunit.</text>
</comment>
<comment type="cofactor">
    <cofactor evidence="1">
        <name>K(+)</name>
        <dbReference type="ChEBI" id="CHEBI:29103"/>
    </cofactor>
    <text evidence="1">Binds 1 potassium ion per subunit.</text>
</comment>
<comment type="pathway">
    <text evidence="1">Amino-acid biosynthesis; S-adenosyl-L-methionine biosynthesis; S-adenosyl-L-methionine from L-methionine: step 1/1.</text>
</comment>
<comment type="subunit">
    <text evidence="1">Homotetramer; dimer of dimers.</text>
</comment>
<comment type="subcellular location">
    <subcellularLocation>
        <location evidence="1">Cytoplasm</location>
    </subcellularLocation>
</comment>
<comment type="similarity">
    <text evidence="1">Belongs to the AdoMet synthase family.</text>
</comment>
<feature type="chain" id="PRO_0000240994" description="S-adenosylmethionine synthase">
    <location>
        <begin position="1"/>
        <end position="386"/>
    </location>
</feature>
<feature type="region of interest" description="Flexible loop" evidence="1">
    <location>
        <begin position="100"/>
        <end position="110"/>
    </location>
</feature>
<feature type="binding site" description="in other chain" evidence="1">
    <location>
        <position position="16"/>
    </location>
    <ligand>
        <name>ATP</name>
        <dbReference type="ChEBI" id="CHEBI:30616"/>
        <note>ligand shared between two neighboring subunits</note>
    </ligand>
</feature>
<feature type="binding site" evidence="1">
    <location>
        <position position="18"/>
    </location>
    <ligand>
        <name>Mg(2+)</name>
        <dbReference type="ChEBI" id="CHEBI:18420"/>
    </ligand>
</feature>
<feature type="binding site" evidence="1">
    <location>
        <position position="44"/>
    </location>
    <ligand>
        <name>K(+)</name>
        <dbReference type="ChEBI" id="CHEBI:29103"/>
    </ligand>
</feature>
<feature type="binding site" description="in other chain" evidence="1">
    <location>
        <position position="57"/>
    </location>
    <ligand>
        <name>L-methionine</name>
        <dbReference type="ChEBI" id="CHEBI:57844"/>
        <note>ligand shared between two neighboring subunits</note>
    </ligand>
</feature>
<feature type="binding site" description="in other chain" evidence="1">
    <location>
        <position position="100"/>
    </location>
    <ligand>
        <name>L-methionine</name>
        <dbReference type="ChEBI" id="CHEBI:57844"/>
        <note>ligand shared between two neighboring subunits</note>
    </ligand>
</feature>
<feature type="binding site" description="in other chain" evidence="1">
    <location>
        <begin position="165"/>
        <end position="167"/>
    </location>
    <ligand>
        <name>ATP</name>
        <dbReference type="ChEBI" id="CHEBI:30616"/>
        <note>ligand shared between two neighboring subunits</note>
    </ligand>
</feature>
<feature type="binding site" evidence="1">
    <location>
        <position position="240"/>
    </location>
    <ligand>
        <name>ATP</name>
        <dbReference type="ChEBI" id="CHEBI:30616"/>
        <note>ligand shared between two neighboring subunits</note>
    </ligand>
</feature>
<feature type="binding site" evidence="1">
    <location>
        <position position="240"/>
    </location>
    <ligand>
        <name>L-methionine</name>
        <dbReference type="ChEBI" id="CHEBI:57844"/>
        <note>ligand shared between two neighboring subunits</note>
    </ligand>
</feature>
<feature type="binding site" description="in other chain" evidence="1">
    <location>
        <begin position="246"/>
        <end position="247"/>
    </location>
    <ligand>
        <name>ATP</name>
        <dbReference type="ChEBI" id="CHEBI:30616"/>
        <note>ligand shared between two neighboring subunits</note>
    </ligand>
</feature>
<feature type="binding site" evidence="1">
    <location>
        <position position="263"/>
    </location>
    <ligand>
        <name>ATP</name>
        <dbReference type="ChEBI" id="CHEBI:30616"/>
        <note>ligand shared between two neighboring subunits</note>
    </ligand>
</feature>
<feature type="binding site" evidence="1">
    <location>
        <position position="267"/>
    </location>
    <ligand>
        <name>ATP</name>
        <dbReference type="ChEBI" id="CHEBI:30616"/>
        <note>ligand shared between two neighboring subunits</note>
    </ligand>
</feature>
<feature type="binding site" description="in other chain" evidence="1">
    <location>
        <position position="271"/>
    </location>
    <ligand>
        <name>L-methionine</name>
        <dbReference type="ChEBI" id="CHEBI:57844"/>
        <note>ligand shared between two neighboring subunits</note>
    </ligand>
</feature>
<proteinExistence type="inferred from homology"/>
<name>METK_FRATH</name>
<accession>Q2A1N2</accession>